<feature type="chain" id="PRO_0000288074" description="Cyclic AMP-responsive element-binding protein 3-like protein 3">
    <location>
        <begin position="1"/>
        <end position="461"/>
    </location>
</feature>
<feature type="chain" id="PRO_0000296216" description="Processed cyclic AMP-responsive element-binding protein 3-like protein 3">
    <location>
        <begin position="1"/>
        <end status="unknown"/>
    </location>
</feature>
<feature type="topological domain" description="Cytoplasmic" evidence="3">
    <location>
        <begin position="1"/>
        <end position="322"/>
    </location>
</feature>
<feature type="transmembrane region" description="Helical; Signal-anchor for type II membrane protein" evidence="3">
    <location>
        <begin position="323"/>
        <end position="343"/>
    </location>
</feature>
<feature type="topological domain" description="Lumenal" evidence="3">
    <location>
        <begin position="344"/>
        <end position="461"/>
    </location>
</feature>
<feature type="domain" description="bZIP" evidence="4">
    <location>
        <begin position="243"/>
        <end position="306"/>
    </location>
</feature>
<feature type="region of interest" description="Disordered" evidence="5">
    <location>
        <begin position="51"/>
        <end position="120"/>
    </location>
</feature>
<feature type="region of interest" description="Basic motif" evidence="4">
    <location>
        <begin position="245"/>
        <end position="274"/>
    </location>
</feature>
<feature type="region of interest" description="Leucine-zipper" evidence="4">
    <location>
        <begin position="285"/>
        <end position="306"/>
    </location>
</feature>
<feature type="region of interest" description="Disordered" evidence="5">
    <location>
        <begin position="370"/>
        <end position="408"/>
    </location>
</feature>
<feature type="region of interest" description="Disordered" evidence="5">
    <location>
        <begin position="442"/>
        <end position="461"/>
    </location>
</feature>
<feature type="compositionally biased region" description="Low complexity" evidence="5">
    <location>
        <begin position="63"/>
        <end position="85"/>
    </location>
</feature>
<feature type="compositionally biased region" description="Basic and acidic residues" evidence="5">
    <location>
        <begin position="386"/>
        <end position="395"/>
    </location>
</feature>
<feature type="site" description="Cleavage; by PS1" evidence="1">
    <location>
        <begin position="363"/>
        <end position="364"/>
    </location>
</feature>
<feature type="modified residue" description="Phosphoserine" evidence="18">
    <location>
        <position position="173"/>
    </location>
</feature>
<feature type="glycosylation site" description="O-linked (GalNAc...) serine" evidence="11">
    <location>
        <position position="379"/>
    </location>
</feature>
<feature type="glycosylation site" description="N-linked (GlcNAc...) asparagine" evidence="3">
    <location>
        <position position="410"/>
    </location>
</feature>
<feature type="glycosylation site" description="N-linked (GlcNAc...) asparagine" evidence="9">
    <location>
        <position position="413"/>
    </location>
</feature>
<feature type="glycosylation site" description="N-linked (GlcNAc...) asparagine" evidence="9">
    <location>
        <position position="420"/>
    </location>
</feature>
<feature type="glycosylation site" description="N-linked (GlcNAc...) asparagine" evidence="9">
    <location>
        <position position="427"/>
    </location>
</feature>
<feature type="cross-link" description="Glycyl lysine isopeptide (Lys-Gly) (interchain with G-Cter in ubiquitin)" evidence="17">
    <location>
        <position position="294"/>
    </location>
</feature>
<feature type="splice variant" id="VSP_025637" description="In isoform 2." evidence="14">
    <location>
        <position position="53"/>
    </location>
</feature>
<feature type="splice variant" id="VSP_054876" description="In isoform 3." evidence="15">
    <location>
        <begin position="193"/>
        <end position="194"/>
    </location>
</feature>
<feature type="splice variant" id="VSP_055635" description="In isoform 4." evidence="15">
    <original>YEERVLKKIRRKIRNKQSAQESRKKKKEYIDGLETRMSACTAQNQELQRKVLHLEKQNLSLLEQLKKLQAIVVQSTSKSAQTGTCVAVLLLSFALIILP</original>
    <variation>DVSLHCSESGVTEESLASREAKPVPLGATEETPGHCGAVHQQVSPDRHLCRSPVAVLCPHHPPLHQPFWPQQNREPWGLCACTSVLQNFAQRCCLPRGC</variation>
    <location>
        <begin position="239"/>
        <end position="337"/>
    </location>
</feature>
<feature type="splice variant" id="VSP_055636" description="In isoform 4." evidence="15">
    <location>
        <begin position="338"/>
        <end position="461"/>
    </location>
</feature>
<feature type="sequence variant" id="VAR_085795" description="In HYTG2; risk factor; loss of transactivation activity in APOA4, APOC2 or FGF21 promoter-driven luciferase assays." evidence="10">
    <location>
        <begin position="46"/>
        <end position="461"/>
    </location>
</feature>
<feature type="sequence variant" id="VAR_085796" description="In dbSNP:rs77002741." evidence="10">
    <original>G</original>
    <variation>R</variation>
    <location>
        <position position="105"/>
    </location>
</feature>
<feature type="sequence variant" id="VAR_085797" description="In HYTG2; uncertain significance; no effect on transactivation activity in APOA4, APOC2 or FGF21 promoter-driven luciferase assays; dbSNP:rs775653860." evidence="10">
    <original>P</original>
    <variation>L</variation>
    <location>
        <position position="166"/>
    </location>
</feature>
<feature type="sequence variant" id="VAR_085798" description="In HYTG2; uncertain significance; no effect on transactivation activity in APOA4, APOC2 or FGF21 promoter-driven luciferase assays; dbSNP:rs548714946." evidence="10">
    <original>V</original>
    <variation>M</variation>
    <location>
        <position position="180"/>
    </location>
</feature>
<feature type="sequence variant" id="VAR_085799" description="In HYTG2; uncertain significance; no effect on transactivation activity in APOA4, APOC2 or FGF21 promoter-driven luciferase assays; dbSNP:rs140312652." evidence="10">
    <original>D</original>
    <variation>N</variation>
    <location>
        <position position="182"/>
    </location>
</feature>
<feature type="sequence variant" id="VAR_085800" description="In HYTG2; risk factor; severely reduced transactivation activity in APOA4, APOC2 or FGF21 promoter-driven luciferase assays; dbSNP:rs778428363." evidence="10">
    <original>E</original>
    <variation>K</variation>
    <location>
        <position position="240"/>
    </location>
</feature>
<feature type="mutagenesis site" description="Loss of ubiquitination by SYNV1/HRD1." evidence="13">
    <original>K</original>
    <variation>R</variation>
    <location>
        <position position="294"/>
    </location>
</feature>
<feature type="mutagenesis site" description="Decreases proteolytic cleavage upon ER stress." evidence="8">
    <original>R</original>
    <variation>A</variation>
    <location>
        <position position="361"/>
    </location>
</feature>
<feature type="sequence conflict" description="In Ref. 3; BAD18804." evidence="16" ref="3">
    <original>L</original>
    <variation>P</variation>
    <location>
        <position position="437"/>
    </location>
</feature>
<evidence type="ECO:0000250" key="1"/>
<evidence type="ECO:0000250" key="2">
    <source>
        <dbReference type="UniProtKB" id="Q91XE9"/>
    </source>
</evidence>
<evidence type="ECO:0000255" key="3"/>
<evidence type="ECO:0000255" key="4">
    <source>
        <dbReference type="PROSITE-ProRule" id="PRU00978"/>
    </source>
</evidence>
<evidence type="ECO:0000256" key="5">
    <source>
        <dbReference type="SAM" id="MobiDB-lite"/>
    </source>
</evidence>
<evidence type="ECO:0000269" key="6">
    <source>
    </source>
</evidence>
<evidence type="ECO:0000269" key="7">
    <source>
    </source>
</evidence>
<evidence type="ECO:0000269" key="8">
    <source>
    </source>
</evidence>
<evidence type="ECO:0000269" key="9">
    <source>
    </source>
</evidence>
<evidence type="ECO:0000269" key="10">
    <source>
    </source>
</evidence>
<evidence type="ECO:0000269" key="11">
    <source>
    </source>
</evidence>
<evidence type="ECO:0000269" key="12">
    <source>
    </source>
</evidence>
<evidence type="ECO:0000269" key="13">
    <source>
    </source>
</evidence>
<evidence type="ECO:0000303" key="14">
    <source>
    </source>
</evidence>
<evidence type="ECO:0000303" key="15">
    <source>
    </source>
</evidence>
<evidence type="ECO:0000305" key="16"/>
<evidence type="ECO:0000305" key="17">
    <source>
    </source>
</evidence>
<evidence type="ECO:0007744" key="18">
    <source>
    </source>
</evidence>
<reference key="1">
    <citation type="journal article" date="2001" name="Nucleic Acids Res.">
        <title>CREB-H: a novel mammalian transcription factor belonging to the CREB/ATF family and functioning via the box-B element with a liver-specific expression.</title>
        <authorList>
            <person name="Omori Y."/>
            <person name="Imai J."/>
            <person name="Watanabe M."/>
            <person name="Komatsu T."/>
            <person name="Suzuki Y."/>
            <person name="Kataoka K."/>
            <person name="Watanabe S."/>
            <person name="Tanigami A."/>
            <person name="Sugano S."/>
        </authorList>
    </citation>
    <scope>NUCLEOTIDE SEQUENCE [MRNA] (ISOFORM 1)</scope>
    <scope>FUNCTION</scope>
    <scope>SUBCELLULAR LOCATION</scope>
    <scope>TISSUE SPECIFICITY</scope>
</reference>
<reference key="2">
    <citation type="journal article" date="2004" name="Oncogene">
        <title>Expression profiling and differential screening between hepatoblastomas and the corresponding normal livers: identification of high expression of the PLK1 oncogene as a poor-prognostic indicator of hepatoblastomas.</title>
        <authorList>
            <person name="Yamada S."/>
            <person name="Ohira M."/>
            <person name="Horie H."/>
            <person name="Ando K."/>
            <person name="Takayasu H."/>
            <person name="Suzuki Y."/>
            <person name="Sugano S."/>
            <person name="Hirata T."/>
            <person name="Goto T."/>
            <person name="Matsunaga T."/>
            <person name="Hiyama E."/>
            <person name="Hayashi Y."/>
            <person name="Ando H."/>
            <person name="Suita S."/>
            <person name="Kaneko M."/>
            <person name="Sasaki F."/>
            <person name="Hashizume K."/>
            <person name="Ohnuma N."/>
            <person name="Nakagawara A."/>
        </authorList>
    </citation>
    <scope>NUCLEOTIDE SEQUENCE [MRNA] (ISOFORM 2)</scope>
</reference>
<reference key="3">
    <citation type="journal article" date="2004" name="Nat. Genet.">
        <title>Complete sequencing and characterization of 21,243 full-length human cDNAs.</title>
        <authorList>
            <person name="Ota T."/>
            <person name="Suzuki Y."/>
            <person name="Nishikawa T."/>
            <person name="Otsuki T."/>
            <person name="Sugiyama T."/>
            <person name="Irie R."/>
            <person name="Wakamatsu A."/>
            <person name="Hayashi K."/>
            <person name="Sato H."/>
            <person name="Nagai K."/>
            <person name="Kimura K."/>
            <person name="Makita H."/>
            <person name="Sekine M."/>
            <person name="Obayashi M."/>
            <person name="Nishi T."/>
            <person name="Shibahara T."/>
            <person name="Tanaka T."/>
            <person name="Ishii S."/>
            <person name="Yamamoto J."/>
            <person name="Saito K."/>
            <person name="Kawai Y."/>
            <person name="Isono Y."/>
            <person name="Nakamura Y."/>
            <person name="Nagahari K."/>
            <person name="Murakami K."/>
            <person name="Yasuda T."/>
            <person name="Iwayanagi T."/>
            <person name="Wagatsuma M."/>
            <person name="Shiratori A."/>
            <person name="Sudo H."/>
            <person name="Hosoiri T."/>
            <person name="Kaku Y."/>
            <person name="Kodaira H."/>
            <person name="Kondo H."/>
            <person name="Sugawara M."/>
            <person name="Takahashi M."/>
            <person name="Kanda K."/>
            <person name="Yokoi T."/>
            <person name="Furuya T."/>
            <person name="Kikkawa E."/>
            <person name="Omura Y."/>
            <person name="Abe K."/>
            <person name="Kamihara K."/>
            <person name="Katsuta N."/>
            <person name="Sato K."/>
            <person name="Tanikawa M."/>
            <person name="Yamazaki M."/>
            <person name="Ninomiya K."/>
            <person name="Ishibashi T."/>
            <person name="Yamashita H."/>
            <person name="Murakawa K."/>
            <person name="Fujimori K."/>
            <person name="Tanai H."/>
            <person name="Kimata M."/>
            <person name="Watanabe M."/>
            <person name="Hiraoka S."/>
            <person name="Chiba Y."/>
            <person name="Ishida S."/>
            <person name="Ono Y."/>
            <person name="Takiguchi S."/>
            <person name="Watanabe S."/>
            <person name="Yosida M."/>
            <person name="Hotuta T."/>
            <person name="Kusano J."/>
            <person name="Kanehori K."/>
            <person name="Takahashi-Fujii A."/>
            <person name="Hara H."/>
            <person name="Tanase T.-O."/>
            <person name="Nomura Y."/>
            <person name="Togiya S."/>
            <person name="Komai F."/>
            <person name="Hara R."/>
            <person name="Takeuchi K."/>
            <person name="Arita M."/>
            <person name="Imose N."/>
            <person name="Musashino K."/>
            <person name="Yuuki H."/>
            <person name="Oshima A."/>
            <person name="Sasaki N."/>
            <person name="Aotsuka S."/>
            <person name="Yoshikawa Y."/>
            <person name="Matsunawa H."/>
            <person name="Ichihara T."/>
            <person name="Shiohata N."/>
            <person name="Sano S."/>
            <person name="Moriya S."/>
            <person name="Momiyama H."/>
            <person name="Satoh N."/>
            <person name="Takami S."/>
            <person name="Terashima Y."/>
            <person name="Suzuki O."/>
            <person name="Nakagawa S."/>
            <person name="Senoh A."/>
            <person name="Mizoguchi H."/>
            <person name="Goto Y."/>
            <person name="Shimizu F."/>
            <person name="Wakebe H."/>
            <person name="Hishigaki H."/>
            <person name="Watanabe T."/>
            <person name="Sugiyama A."/>
            <person name="Takemoto M."/>
            <person name="Kawakami B."/>
            <person name="Yamazaki M."/>
            <person name="Watanabe K."/>
            <person name="Kumagai A."/>
            <person name="Itakura S."/>
            <person name="Fukuzumi Y."/>
            <person name="Fujimori Y."/>
            <person name="Komiyama M."/>
            <person name="Tashiro H."/>
            <person name="Tanigami A."/>
            <person name="Fujiwara T."/>
            <person name="Ono T."/>
            <person name="Yamada K."/>
            <person name="Fujii Y."/>
            <person name="Ozaki K."/>
            <person name="Hirao M."/>
            <person name="Ohmori Y."/>
            <person name="Kawabata A."/>
            <person name="Hikiji T."/>
            <person name="Kobatake N."/>
            <person name="Inagaki H."/>
            <person name="Ikema Y."/>
            <person name="Okamoto S."/>
            <person name="Okitani R."/>
            <person name="Kawakami T."/>
            <person name="Noguchi S."/>
            <person name="Itoh T."/>
            <person name="Shigeta K."/>
            <person name="Senba T."/>
            <person name="Matsumura K."/>
            <person name="Nakajima Y."/>
            <person name="Mizuno T."/>
            <person name="Morinaga M."/>
            <person name="Sasaki M."/>
            <person name="Togashi T."/>
            <person name="Oyama M."/>
            <person name="Hata H."/>
            <person name="Watanabe M."/>
            <person name="Komatsu T."/>
            <person name="Mizushima-Sugano J."/>
            <person name="Satoh T."/>
            <person name="Shirai Y."/>
            <person name="Takahashi Y."/>
            <person name="Nakagawa K."/>
            <person name="Okumura K."/>
            <person name="Nagase T."/>
            <person name="Nomura N."/>
            <person name="Kikuchi H."/>
            <person name="Masuho Y."/>
            <person name="Yamashita R."/>
            <person name="Nakai K."/>
            <person name="Yada T."/>
            <person name="Nakamura Y."/>
            <person name="Ohara O."/>
            <person name="Isogai T."/>
            <person name="Sugano S."/>
        </authorList>
    </citation>
    <scope>NUCLEOTIDE SEQUENCE [LARGE SCALE MRNA] (ISOFORM 1)</scope>
    <source>
        <tissue>Ileal mucosa</tissue>
        <tissue>Thalamus</tissue>
    </source>
</reference>
<reference key="4">
    <citation type="journal article" date="2004" name="Nature">
        <title>The DNA sequence and biology of human chromosome 19.</title>
        <authorList>
            <person name="Grimwood J."/>
            <person name="Gordon L.A."/>
            <person name="Olsen A.S."/>
            <person name="Terry A."/>
            <person name="Schmutz J."/>
            <person name="Lamerdin J.E."/>
            <person name="Hellsten U."/>
            <person name="Goodstein D."/>
            <person name="Couronne O."/>
            <person name="Tran-Gyamfi M."/>
            <person name="Aerts A."/>
            <person name="Altherr M."/>
            <person name="Ashworth L."/>
            <person name="Bajorek E."/>
            <person name="Black S."/>
            <person name="Branscomb E."/>
            <person name="Caenepeel S."/>
            <person name="Carrano A.V."/>
            <person name="Caoile C."/>
            <person name="Chan Y.M."/>
            <person name="Christensen M."/>
            <person name="Cleland C.A."/>
            <person name="Copeland A."/>
            <person name="Dalin E."/>
            <person name="Dehal P."/>
            <person name="Denys M."/>
            <person name="Detter J.C."/>
            <person name="Escobar J."/>
            <person name="Flowers D."/>
            <person name="Fotopulos D."/>
            <person name="Garcia C."/>
            <person name="Georgescu A.M."/>
            <person name="Glavina T."/>
            <person name="Gomez M."/>
            <person name="Gonzales E."/>
            <person name="Groza M."/>
            <person name="Hammon N."/>
            <person name="Hawkins T."/>
            <person name="Haydu L."/>
            <person name="Ho I."/>
            <person name="Huang W."/>
            <person name="Israni S."/>
            <person name="Jett J."/>
            <person name="Kadner K."/>
            <person name="Kimball H."/>
            <person name="Kobayashi A."/>
            <person name="Larionov V."/>
            <person name="Leem S.-H."/>
            <person name="Lopez F."/>
            <person name="Lou Y."/>
            <person name="Lowry S."/>
            <person name="Malfatti S."/>
            <person name="Martinez D."/>
            <person name="McCready P.M."/>
            <person name="Medina C."/>
            <person name="Morgan J."/>
            <person name="Nelson K."/>
            <person name="Nolan M."/>
            <person name="Ovcharenko I."/>
            <person name="Pitluck S."/>
            <person name="Pollard M."/>
            <person name="Popkie A.P."/>
            <person name="Predki P."/>
            <person name="Quan G."/>
            <person name="Ramirez L."/>
            <person name="Rash S."/>
            <person name="Retterer J."/>
            <person name="Rodriguez A."/>
            <person name="Rogers S."/>
            <person name="Salamov A."/>
            <person name="Salazar A."/>
            <person name="She X."/>
            <person name="Smith D."/>
            <person name="Slezak T."/>
            <person name="Solovyev V."/>
            <person name="Thayer N."/>
            <person name="Tice H."/>
            <person name="Tsai M."/>
            <person name="Ustaszewska A."/>
            <person name="Vo N."/>
            <person name="Wagner M."/>
            <person name="Wheeler J."/>
            <person name="Wu K."/>
            <person name="Xie G."/>
            <person name="Yang J."/>
            <person name="Dubchak I."/>
            <person name="Furey T.S."/>
            <person name="DeJong P."/>
            <person name="Dickson M."/>
            <person name="Gordon D."/>
            <person name="Eichler E.E."/>
            <person name="Pennacchio L.A."/>
            <person name="Richardson P."/>
            <person name="Stubbs L."/>
            <person name="Rokhsar D.S."/>
            <person name="Myers R.M."/>
            <person name="Rubin E.M."/>
            <person name="Lucas S.M."/>
        </authorList>
    </citation>
    <scope>NUCLEOTIDE SEQUENCE [LARGE SCALE GENOMIC DNA]</scope>
</reference>
<reference key="5">
    <citation type="submission" date="2005-09" db="EMBL/GenBank/DDBJ databases">
        <authorList>
            <person name="Mural R.J."/>
            <person name="Istrail S."/>
            <person name="Sutton G.G."/>
            <person name="Florea L."/>
            <person name="Halpern A.L."/>
            <person name="Mobarry C.M."/>
            <person name="Lippert R."/>
            <person name="Walenz B."/>
            <person name="Shatkay H."/>
            <person name="Dew I."/>
            <person name="Miller J.R."/>
            <person name="Flanigan M.J."/>
            <person name="Edwards N.J."/>
            <person name="Bolanos R."/>
            <person name="Fasulo D."/>
            <person name="Halldorsson B.V."/>
            <person name="Hannenhalli S."/>
            <person name="Turner R."/>
            <person name="Yooseph S."/>
            <person name="Lu F."/>
            <person name="Nusskern D.R."/>
            <person name="Shue B.C."/>
            <person name="Zheng X.H."/>
            <person name="Zhong F."/>
            <person name="Delcher A.L."/>
            <person name="Huson D.H."/>
            <person name="Kravitz S.A."/>
            <person name="Mouchard L."/>
            <person name="Reinert K."/>
            <person name="Remington K.A."/>
            <person name="Clark A.G."/>
            <person name="Waterman M.S."/>
            <person name="Eichler E.E."/>
            <person name="Adams M.D."/>
            <person name="Hunkapiller M.W."/>
            <person name="Myers E.W."/>
            <person name="Venter J.C."/>
        </authorList>
    </citation>
    <scope>NUCLEOTIDE SEQUENCE [LARGE SCALE GENOMIC DNA]</scope>
</reference>
<reference key="6">
    <citation type="journal article" date="2004" name="Genome Res.">
        <title>The status, quality, and expansion of the NIH full-length cDNA project: the Mammalian Gene Collection (MGC).</title>
        <authorList>
            <consortium name="The MGC Project Team"/>
        </authorList>
    </citation>
    <scope>NUCLEOTIDE SEQUENCE [LARGE SCALE MRNA] (ISOFORMS 1; 3 AND 4)</scope>
    <source>
        <tissue>Brain</tissue>
    </source>
</reference>
<reference key="7">
    <citation type="journal article" date="2005" name="Nucleic Acids Res.">
        <title>The liver-enriched transcription factor CREB-H is a growth suppressor protein underexpressed in hepatocellular carcinoma.</title>
        <authorList>
            <person name="Chin K.-T."/>
            <person name="Zhou H.-J."/>
            <person name="Wong C.-M."/>
            <person name="Lee J.M.-F."/>
            <person name="Chan C.-P."/>
            <person name="Qiang B.-Q."/>
            <person name="Yuan J.-G."/>
            <person name="Ng I.-O."/>
            <person name="Jin D.-Y."/>
        </authorList>
    </citation>
    <scope>FUNCTION</scope>
    <scope>TISSUE SPECIFICITY</scope>
</reference>
<reference key="8">
    <citation type="journal article" date="2006" name="Cell">
        <title>Endoplasmic reticulum stress activates cleavage of CREBH to induce a systemic inflammatory response.</title>
        <authorList>
            <person name="Zhang K."/>
            <person name="Shen X."/>
            <person name="Wu J."/>
            <person name="Sakaki K."/>
            <person name="Saunders T."/>
            <person name="Rutkowski D.T."/>
            <person name="Back S.H."/>
            <person name="Kaufman R.J."/>
        </authorList>
    </citation>
    <scope>FUNCTION</scope>
    <scope>PROTEOLYTIC CLEAVAGE</scope>
    <scope>SELF-ASSOCIATION</scope>
    <scope>INTERACTION WITH ATF6</scope>
    <scope>MUTAGENESIS OF ARG-361</scope>
</reference>
<reference key="9">
    <citation type="journal article" date="2010" name="J. Cell Sci.">
        <title>N-linked glycosylation is required for optimal proteolytic activation of membrane-bound transcription factor CREB-H.</title>
        <authorList>
            <person name="Chan C.P."/>
            <person name="Mak T.Y."/>
            <person name="Chin K.T."/>
            <person name="Ng I.O."/>
            <person name="Jin D.Y."/>
        </authorList>
    </citation>
    <scope>GLYCOSYLATION AT ASN-413; ASN-420 AND ASN-427</scope>
</reference>
<reference key="10">
    <citation type="journal article" date="2012" name="Mol. Cell. Proteomics">
        <title>Human urinary glycoproteomics; attachment site specific analysis of N- and O-linked glycosylations by CID and ECD.</title>
        <authorList>
            <person name="Halim A."/>
            <person name="Nilsson J."/>
            <person name="Ruetschi U."/>
            <person name="Hesse C."/>
            <person name="Larson G."/>
        </authorList>
    </citation>
    <scope>GLYCOSYLATION AT SER-379</scope>
    <scope>STRUCTURE OF CARBOHYDRATES</scope>
    <scope>IDENTIFICATION BY MASS SPECTROMETRY</scope>
</reference>
<reference key="11">
    <citation type="journal article" date="2014" name="J. Proteomics">
        <title>An enzyme assisted RP-RPLC approach for in-depth analysis of human liver phosphoproteome.</title>
        <authorList>
            <person name="Bian Y."/>
            <person name="Song C."/>
            <person name="Cheng K."/>
            <person name="Dong M."/>
            <person name="Wang F."/>
            <person name="Huang J."/>
            <person name="Sun D."/>
            <person name="Wang L."/>
            <person name="Ye M."/>
            <person name="Zou H."/>
        </authorList>
    </citation>
    <scope>PHOSPHORYLATION [LARGE SCALE ANALYSIS] AT SER-173</scope>
    <scope>IDENTIFICATION BY MASS SPECTROMETRY [LARGE SCALE ANALYSIS]</scope>
    <source>
        <tissue>Liver</tissue>
    </source>
</reference>
<reference key="12">
    <citation type="journal article" date="2018" name="EMBO J.">
        <title>HRD1-ERAD controls production of the hepatokine FGF21 through CREBH polyubiquitination.</title>
        <authorList>
            <person name="Wei J."/>
            <person name="Chen L."/>
            <person name="Li F."/>
            <person name="Yuan Y."/>
            <person name="Wang Y."/>
            <person name="Xia W."/>
            <person name="Zhang Y."/>
            <person name="Xu Y."/>
            <person name="Yang Z."/>
            <person name="Gao B."/>
            <person name="Jin C."/>
            <person name="Melo-Cardenas J."/>
            <person name="Green R.M."/>
            <person name="Pan H."/>
            <person name="Wang J."/>
            <person name="He F."/>
            <person name="Zhang K."/>
            <person name="Fang D."/>
        </authorList>
    </citation>
    <scope>SUBCELLULAR LOCATION</scope>
    <scope>MUTAGENESIS OF LYS-294</scope>
    <scope>UBIQUITINATION AT LYS-294</scope>
</reference>
<reference key="13">
    <citation type="journal article" date="2011" name="Nat. Med.">
        <title>The transcription factor cyclic AMP-responsive element-binding protein H regulates triglyceride metabolism.</title>
        <authorList>
            <person name="Lee J.H."/>
            <person name="Giannikopoulos P."/>
            <person name="Duncan S.A."/>
            <person name="Wang J."/>
            <person name="Johansen C.T."/>
            <person name="Brown J.D."/>
            <person name="Plutzky J."/>
            <person name="Hegele R.A."/>
            <person name="Glimcher L.H."/>
            <person name="Lee A.H."/>
        </authorList>
    </citation>
    <scope>FUNCTION</scope>
    <scope>INVOLVEMENT IN HYTG2</scope>
    <scope>VARIANTS HYTG2 46-TRP--LEU-461 DEL; LEU-166; MET-180; ASN-182 AND LYS-240</scope>
    <scope>CHARACTERIZATION OF VARIANTS HYTG2 46-TRP--LEU-461 DEL; LEU-166; MET-180; ASN-182 AND LYS-240</scope>
    <scope>VARIANT ARG-105</scope>
</reference>
<reference key="14">
    <citation type="journal article" date="2015" name="Arterioscler. Thromb. Vasc. Biol.">
        <title>Novel CREB3L3 nonsense mutation in a family with dominant hypertriglyceridemia.</title>
        <authorList>
            <person name="Cefalu A.B."/>
            <person name="Spina R."/>
            <person name="Noto D."/>
            <person name="Valenti V."/>
            <person name="Ingrassia V."/>
            <person name="Giammanco A."/>
            <person name="Panno M.D."/>
            <person name="Ganci A."/>
            <person name="Barbagallo C.M."/>
            <person name="Averna M.R."/>
        </authorList>
    </citation>
    <scope>INVOLVEMENT IN HYTG2</scope>
</reference>
<protein>
    <recommendedName>
        <fullName>Cyclic AMP-responsive element-binding protein 3-like protein 3</fullName>
        <shortName>cAMP-responsive element-binding protein 3-like protein 3</shortName>
    </recommendedName>
    <alternativeName>
        <fullName>Transcription factor CREB-H</fullName>
    </alternativeName>
    <component>
        <recommendedName>
            <fullName>Processed cyclic AMP-responsive element-binding protein 3-like protein 3</fullName>
        </recommendedName>
    </component>
</protein>
<gene>
    <name type="primary">CREB3L3</name>
    <name type="synonym">CREBH</name>
    <name type="ORF">HYST1481</name>
</gene>
<proteinExistence type="evidence at protein level"/>
<organism>
    <name type="scientific">Homo sapiens</name>
    <name type="common">Human</name>
    <dbReference type="NCBI Taxonomy" id="9606"/>
    <lineage>
        <taxon>Eukaryota</taxon>
        <taxon>Metazoa</taxon>
        <taxon>Chordata</taxon>
        <taxon>Craniata</taxon>
        <taxon>Vertebrata</taxon>
        <taxon>Euteleostomi</taxon>
        <taxon>Mammalia</taxon>
        <taxon>Eutheria</taxon>
        <taxon>Euarchontoglires</taxon>
        <taxon>Primates</taxon>
        <taxon>Haplorrhini</taxon>
        <taxon>Catarrhini</taxon>
        <taxon>Hominidae</taxon>
        <taxon>Homo</taxon>
    </lineage>
</organism>
<accession>Q68CJ9</accession>
<accession>B2R7S6</accession>
<accession>B7ZL69</accession>
<accession>M0QYW7</accession>
<accession>Q6ZMC5</accession>
<accession>Q96TB9</accession>
<comment type="function">
    <text evidence="1 2 6 7 8 10">Transcription factor that may act during endoplasmic reticulum stress by activating unfolded protein response target genes. Activated in response to cAMP stimulation. In vitro, binds to the cAMP response element (CRE) and box-B element. Activates transcription through box-B element. Activates transcription through CRE (By similarity). May function synergistically with ATF6. In acute inflammatory response, may activate expression of acute phase response (APR) genes. May be involved in growth suppression. Regulates FGF21 transcription (By similarity). Plays a crucial role in the regulation of triglyceride metabolism and is required for the maintenance of normal plasma triglyceride concentrations (PubMed:21666694).</text>
</comment>
<comment type="subunit">
    <text evidence="1 2 8">Binds DNA as a dimer (By similarity). May form homodimers (PubMed:16469704). Interacts with ATF6 (PubMed:16469704). Interacts with SYNV1/HRD1; this interaction leads to CREB3L3 ubiquitination and proteasomal degradation (By similarity).</text>
</comment>
<comment type="interaction">
    <interactant intactId="EBI-852194">
        <id>Q68CJ9</id>
    </interactant>
    <interactant intactId="EBI-852157">
        <id>P18850</id>
        <label>ATF6</label>
    </interactant>
    <organismsDiffer>false</organismsDiffer>
    <experiments>2</experiments>
</comment>
<comment type="interaction">
    <interactant intactId="EBI-852194">
        <id>Q68CJ9</id>
    </interactant>
    <interactant intactId="EBI-741885">
        <id>Q96LK0</id>
        <label>CEP19</label>
    </interactant>
    <organismsDiffer>false</organismsDiffer>
    <experiments>3</experiments>
</comment>
<comment type="interaction">
    <interactant intactId="EBI-852194">
        <id>Q68CJ9</id>
    </interactant>
    <interactant intactId="EBI-625002">
        <id>O43889</id>
        <label>CREB3</label>
    </interactant>
    <organismsDiffer>false</organismsDiffer>
    <experiments>3</experiments>
</comment>
<comment type="interaction">
    <interactant intactId="EBI-852194">
        <id>Q68CJ9</id>
    </interactant>
    <interactant intactId="EBI-6942903">
        <id>Q96BA8</id>
        <label>CREB3L1</label>
    </interactant>
    <organismsDiffer>false</organismsDiffer>
    <experiments>2</experiments>
</comment>
<comment type="interaction">
    <interactant intactId="EBI-852194">
        <id>Q68CJ9</id>
    </interactant>
    <interactant intactId="EBI-852194">
        <id>Q68CJ9</id>
        <label>CREB3L3</label>
    </interactant>
    <organismsDiffer>false</organismsDiffer>
    <experiments>2</experiments>
</comment>
<comment type="interaction">
    <interactant intactId="EBI-852194">
        <id>Q68CJ9</id>
    </interactant>
    <interactant intactId="EBI-10269179">
        <id>Q8NBI2</id>
        <label>CYB561A3</label>
    </interactant>
    <organismsDiffer>false</organismsDiffer>
    <experiments>3</experiments>
</comment>
<comment type="interaction">
    <interactant intactId="EBI-852194">
        <id>Q68CJ9</id>
    </interactant>
    <interactant intactId="EBI-744973">
        <id>Q9C005</id>
        <label>DPY30</label>
    </interactant>
    <organismsDiffer>false</organismsDiffer>
    <experiments>3</experiments>
</comment>
<comment type="interaction">
    <interactant intactId="EBI-852194">
        <id>Q68CJ9</id>
    </interactant>
    <interactant intactId="EBI-743099">
        <id>Q969F0</id>
        <label>FATE1</label>
    </interactant>
    <organismsDiffer>false</organismsDiffer>
    <experiments>3</experiments>
</comment>
<comment type="interaction">
    <interactant intactId="EBI-852194">
        <id>Q68CJ9</id>
    </interactant>
    <interactant intactId="EBI-10178951">
        <id>O00155</id>
        <label>GPR25</label>
    </interactant>
    <organismsDiffer>false</organismsDiffer>
    <experiments>3</experiments>
</comment>
<comment type="interaction">
    <interactant intactId="EBI-852194">
        <id>Q68CJ9</id>
    </interactant>
    <interactant intactId="EBI-348259">
        <id>Q96EZ8</id>
        <label>MCRS1</label>
    </interactant>
    <organismsDiffer>false</organismsDiffer>
    <experiments>3</experiments>
</comment>
<comment type="interaction">
    <interactant intactId="EBI-852194">
        <id>Q68CJ9</id>
    </interactant>
    <interactant intactId="EBI-12070086">
        <id>Q5J8X5</id>
        <label>MS4A13</label>
    </interactant>
    <organismsDiffer>false</organismsDiffer>
    <experiments>3</experiments>
</comment>
<comment type="interaction">
    <interactant intactId="EBI-852194">
        <id>Q68CJ9</id>
    </interactant>
    <interactant intactId="EBI-3951858">
        <id>Q16649</id>
        <label>NFIL3</label>
    </interactant>
    <organismsDiffer>false</organismsDiffer>
    <experiments>2</experiments>
</comment>
<comment type="interaction">
    <interactant intactId="EBI-852194">
        <id>Q68CJ9</id>
    </interactant>
    <interactant intactId="EBI-14772355">
        <id>Q02094</id>
        <label>RHAG</label>
    </interactant>
    <organismsDiffer>false</organismsDiffer>
    <experiments>3</experiments>
</comment>
<comment type="interaction">
    <interactant intactId="EBI-852194">
        <id>Q68CJ9</id>
    </interactant>
    <interactant intactId="EBI-8636004">
        <id>Q96GQ5</id>
        <label>RUSF1</label>
    </interactant>
    <organismsDiffer>false</organismsDiffer>
    <experiments>3</experiments>
</comment>
<comment type="interaction">
    <interactant intactId="EBI-852194">
        <id>Q68CJ9</id>
    </interactant>
    <interactant intactId="EBI-347996">
        <id>O43765</id>
        <label>SGTA</label>
    </interactant>
    <organismsDiffer>false</organismsDiffer>
    <experiments>3</experiments>
</comment>
<comment type="interaction">
    <interactant intactId="EBI-852194">
        <id>Q68CJ9</id>
    </interactant>
    <interactant intactId="EBI-744081">
        <id>Q96EQ0</id>
        <label>SGTB</label>
    </interactant>
    <organismsDiffer>false</organismsDiffer>
    <experiments>3</experiments>
</comment>
<comment type="interaction">
    <interactant intactId="EBI-852194">
        <id>Q68CJ9</id>
    </interactant>
    <interactant intactId="EBI-10314552">
        <id>Q9NVC3</id>
        <label>SLC38A7</label>
    </interactant>
    <organismsDiffer>false</organismsDiffer>
    <experiments>3</experiments>
</comment>
<comment type="interaction">
    <interactant intactId="EBI-852194">
        <id>Q68CJ9</id>
    </interactant>
    <interactant intactId="EBI-2823239">
        <id>Q9NUM3</id>
        <label>SLC39A9</label>
    </interactant>
    <organismsDiffer>false</organismsDiffer>
    <experiments>3</experiments>
</comment>
<comment type="interaction">
    <interactant intactId="EBI-852194">
        <id>Q68CJ9</id>
    </interactant>
    <interactant intactId="EBI-714206">
        <id>Q13190</id>
        <label>STX5</label>
    </interactant>
    <organismsDiffer>false</organismsDiffer>
    <experiments>3</experiments>
</comment>
<comment type="interaction">
    <interactant intactId="EBI-852194">
        <id>Q68CJ9</id>
    </interactant>
    <interactant intactId="EBI-11955057">
        <id>Q8N8B7-2</id>
        <label>TCEANC</label>
    </interactant>
    <organismsDiffer>false</organismsDiffer>
    <experiments>3</experiments>
</comment>
<comment type="interaction">
    <interactant intactId="EBI-852194">
        <id>Q68CJ9</id>
    </interactant>
    <interactant intactId="EBI-11528917">
        <id>Q8WW34-2</id>
        <label>TMEM239</label>
    </interactant>
    <organismsDiffer>false</organismsDiffer>
    <experiments>3</experiments>
</comment>
<comment type="interaction">
    <interactant intactId="EBI-852194">
        <id>Q68CJ9</id>
    </interactant>
    <interactant intactId="EBI-765817">
        <id>Q9Y228</id>
        <label>TRAF3IP3</label>
    </interactant>
    <organismsDiffer>false</organismsDiffer>
    <experiments>3</experiments>
</comment>
<comment type="interaction">
    <interactant intactId="EBI-852194">
        <id>Q68CJ9</id>
    </interactant>
    <interactant intactId="EBI-751210">
        <id>Q96EC8</id>
        <label>YIPF6</label>
    </interactant>
    <organismsDiffer>false</organismsDiffer>
    <experiments>3</experiments>
</comment>
<comment type="subcellular location">
    <subcellularLocation>
        <location evidence="6">Endoplasmic reticulum membrane</location>
        <topology evidence="6">Single-pass type II membrane protein</topology>
    </subcellularLocation>
</comment>
<comment type="subcellular location">
    <molecule>Processed cyclic AMP-responsive element-binding protein 3-like protein 3</molecule>
    <subcellularLocation>
        <location evidence="13">Nucleus</location>
    </subcellularLocation>
    <text>Under ER stress the cleaved N-terminal cytoplasmic domain translocates into the nucleus.</text>
</comment>
<comment type="alternative products">
    <event type="alternative splicing"/>
    <isoform>
        <id>Q68CJ9-1</id>
        <name>1</name>
        <sequence type="displayed"/>
    </isoform>
    <isoform>
        <id>Q68CJ9-2</id>
        <name>2</name>
        <sequence type="described" ref="VSP_025637"/>
    </isoform>
    <isoform>
        <id>Q68CJ9-4</id>
        <name>3</name>
        <sequence type="described" ref="VSP_054876"/>
    </isoform>
    <isoform>
        <id>Q68CJ9-5</id>
        <name>4</name>
        <sequence type="described" ref="VSP_055635 VSP_055636"/>
    </isoform>
</comment>
<comment type="tissue specificity">
    <text evidence="6 7">Exclusively expressed in liver. Underexpressed in hepatocellular carcinoma tissues.</text>
</comment>
<comment type="PTM">
    <text evidence="8">Controlled by regulated intramembrane proteolysis (RIP). Following ER stress a fragment containing the cytoplasmic transcription factor domain is released by proteolysis. The cleavage seems to be performed sequentially by site-1 and site-2 proteases (PS1 and PS2).</text>
</comment>
<comment type="PTM">
    <text evidence="9 11">N- and O-glycosylated. N-glycosylation is required for optimal proteolytic activation. O-glycosylated with core 1 or possibly core 8 glycans.</text>
</comment>
<comment type="PTM">
    <text evidence="13">Ubiquitinated at Lys-294 by SYNV1/HRD1 via 'Lys-27'-linked ubiquitin.</text>
</comment>
<comment type="disease" evidence="10 12">
    <disease id="DI-06131">
        <name>Hypertriglyceridemia 2</name>
        <acronym>HYTG2</acronym>
        <description>An autosomal dominant form of hypertriglyceridemia, a disorder characterized by elevated plasma triglyceride levels. HYTG2 patients also have increased total cholesterol levels and low levels of high density lipoprotein (HDL) cholesterol. Reduced penetrance has been observed.</description>
        <dbReference type="MIM" id="619324"/>
    </disease>
    <text>Disease susceptibility is associated with variants affecting the gene represented in this entry.</text>
</comment>
<comment type="similarity">
    <text evidence="16">Belongs to the bZIP family. ATF subfamily.</text>
</comment>
<comment type="sequence caution" evidence="16">
    <conflict type="frameshift">
        <sequence resource="EMBL-CDS" id="BAD18804"/>
    </conflict>
</comment>
<comment type="sequence caution" evidence="16">
    <conflict type="miscellaneous discrepancy">
        <sequence resource="EMBL-CDS" id="BAD18804"/>
    </conflict>
    <text>Aberrant splicing.</text>
</comment>
<name>CR3L3_HUMAN</name>
<sequence length="461" mass="49077">MNTDLAAGKMASAACSMDPIDSFELLDLLFDRQDGILRHVELGEGWGHVKDQQVLPNPDSDDFLSSILGSGDSLPSSPLWSPEGSDSGISEDLPSDPQDTPPRSGPATSPAGCHPAQPGKGPCLSYHPGNSCSTTTPGPVIQVPEASVTIDLEMWSPGGRICAEKPADPVDLSPRCNLTVKDLLLSGSSGDLQQHHLGASYLLRPGAGHCQELVLTEDEKKLLAKEGITLPTQLPLTKYEERVLKKIRRKIRNKQSAQESRKKKKEYIDGLETRMSACTAQNQELQRKVLHLEKQNLSLLEQLKKLQAIVVQSTSKSAQTGTCVAVLLLSFALIILPSISPFGPNKTESPGDFAPVRVFSRTLHNDAASRVAADAVPGSEAPGPRPEADTTREESPGSPGADWGFQDTANLTNSTEELDNATLVLRNATEGLGQVALLDWVAPGPSTGSGRAGLEAAGDEL</sequence>
<dbReference type="EMBL" id="AB050902">
    <property type="protein sequence ID" value="BAB47242.1"/>
    <property type="molecule type" value="mRNA"/>
</dbReference>
<dbReference type="EMBL" id="AB073612">
    <property type="protein sequence ID" value="BAD38649.1"/>
    <property type="molecule type" value="mRNA"/>
</dbReference>
<dbReference type="EMBL" id="AK172839">
    <property type="protein sequence ID" value="BAD18804.1"/>
    <property type="status" value="ALT_SEQ"/>
    <property type="molecule type" value="mRNA"/>
</dbReference>
<dbReference type="EMBL" id="AK313099">
    <property type="protein sequence ID" value="BAG35923.1"/>
    <property type="molecule type" value="mRNA"/>
</dbReference>
<dbReference type="EMBL" id="AC016586">
    <property type="status" value="NOT_ANNOTATED_CDS"/>
    <property type="molecule type" value="Genomic_DNA"/>
</dbReference>
<dbReference type="EMBL" id="CH471139">
    <property type="protein sequence ID" value="EAW69260.1"/>
    <property type="molecule type" value="Genomic_DNA"/>
</dbReference>
<dbReference type="EMBL" id="BC101508">
    <property type="protein sequence ID" value="AAI01509.1"/>
    <property type="molecule type" value="mRNA"/>
</dbReference>
<dbReference type="EMBL" id="BC101504">
    <property type="protein sequence ID" value="AAI01505.1"/>
    <property type="molecule type" value="mRNA"/>
</dbReference>
<dbReference type="EMBL" id="BC143609">
    <property type="protein sequence ID" value="AAI43610.1"/>
    <property type="molecule type" value="mRNA"/>
</dbReference>
<dbReference type="EMBL" id="BC143610">
    <property type="status" value="NOT_ANNOTATED_CDS"/>
    <property type="molecule type" value="mRNA"/>
</dbReference>
<dbReference type="CCDS" id="CCDS12121.1">
    <molecule id="Q68CJ9-1"/>
</dbReference>
<dbReference type="CCDS" id="CCDS62498.1">
    <molecule id="Q68CJ9-5"/>
</dbReference>
<dbReference type="CCDS" id="CCDS62499.1">
    <molecule id="Q68CJ9-4"/>
</dbReference>
<dbReference type="CCDS" id="CCDS62500.1">
    <molecule id="Q68CJ9-2"/>
</dbReference>
<dbReference type="RefSeq" id="NP_001258924.1">
    <molecule id="Q68CJ9-2"/>
    <property type="nucleotide sequence ID" value="NM_001271995.2"/>
</dbReference>
<dbReference type="RefSeq" id="NP_001258925.1">
    <molecule id="Q68CJ9-4"/>
    <property type="nucleotide sequence ID" value="NM_001271996.2"/>
</dbReference>
<dbReference type="RefSeq" id="NP_001258926.1">
    <molecule id="Q68CJ9-5"/>
    <property type="nucleotide sequence ID" value="NM_001271997.2"/>
</dbReference>
<dbReference type="RefSeq" id="NP_115996.1">
    <molecule id="Q68CJ9-1"/>
    <property type="nucleotide sequence ID" value="NM_032607.3"/>
</dbReference>
<dbReference type="SMR" id="Q68CJ9"/>
<dbReference type="BioGRID" id="124213">
    <property type="interactions" value="60"/>
</dbReference>
<dbReference type="FunCoup" id="Q68CJ9">
    <property type="interactions" value="1545"/>
</dbReference>
<dbReference type="IntAct" id="Q68CJ9">
    <property type="interactions" value="55"/>
</dbReference>
<dbReference type="STRING" id="9606.ENSP00000078445"/>
<dbReference type="GlyConnect" id="804">
    <property type="glycosylation" value="1 O-Linked glycan (1 site)"/>
</dbReference>
<dbReference type="GlyCosmos" id="Q68CJ9">
    <property type="glycosylation" value="6 sites, 2 glycans"/>
</dbReference>
<dbReference type="GlyGen" id="Q68CJ9">
    <property type="glycosylation" value="6 sites, 4 N-linked glycans (1 site), 2 O-linked glycans (2 sites)"/>
</dbReference>
<dbReference type="iPTMnet" id="Q68CJ9"/>
<dbReference type="PhosphoSitePlus" id="Q68CJ9"/>
<dbReference type="BioMuta" id="CREB3L3"/>
<dbReference type="DMDM" id="148886847"/>
<dbReference type="jPOST" id="Q68CJ9"/>
<dbReference type="MassIVE" id="Q68CJ9"/>
<dbReference type="PaxDb" id="9606-ENSP00000078445"/>
<dbReference type="PeptideAtlas" id="Q68CJ9"/>
<dbReference type="ProteomicsDB" id="66003">
    <molecule id="Q68CJ9-1"/>
</dbReference>
<dbReference type="ProteomicsDB" id="66004">
    <molecule id="Q68CJ9-2"/>
</dbReference>
<dbReference type="Antibodypedia" id="42393">
    <property type="antibodies" value="60 antibodies from 19 providers"/>
</dbReference>
<dbReference type="DNASU" id="84699"/>
<dbReference type="Ensembl" id="ENST00000078445.7">
    <molecule id="Q68CJ9-1"/>
    <property type="protein sequence ID" value="ENSP00000078445.1"/>
    <property type="gene ID" value="ENSG00000060566.14"/>
</dbReference>
<dbReference type="Ensembl" id="ENST00000595923.5">
    <molecule id="Q68CJ9-2"/>
    <property type="protein sequence ID" value="ENSP00000469355.1"/>
    <property type="gene ID" value="ENSG00000060566.14"/>
</dbReference>
<dbReference type="Ensembl" id="ENST00000602147.1">
    <molecule id="Q68CJ9-5"/>
    <property type="protein sequence ID" value="ENSP00000470119.1"/>
    <property type="gene ID" value="ENSG00000060566.14"/>
</dbReference>
<dbReference type="Ensembl" id="ENST00000602257.5">
    <molecule id="Q68CJ9-4"/>
    <property type="protein sequence ID" value="ENSP00000472399.1"/>
    <property type="gene ID" value="ENSG00000060566.14"/>
</dbReference>
<dbReference type="GeneID" id="84699"/>
<dbReference type="KEGG" id="hsa:84699"/>
<dbReference type="MANE-Select" id="ENST00000078445.7">
    <property type="protein sequence ID" value="ENSP00000078445.1"/>
    <property type="RefSeq nucleotide sequence ID" value="NM_032607.3"/>
    <property type="RefSeq protein sequence ID" value="NP_115996.1"/>
</dbReference>
<dbReference type="UCSC" id="uc002lzl.4">
    <molecule id="Q68CJ9-1"/>
    <property type="organism name" value="human"/>
</dbReference>
<dbReference type="AGR" id="HGNC:18855"/>
<dbReference type="CTD" id="84699"/>
<dbReference type="DisGeNET" id="84699"/>
<dbReference type="GeneCards" id="CREB3L3"/>
<dbReference type="HGNC" id="HGNC:18855">
    <property type="gene designation" value="CREB3L3"/>
</dbReference>
<dbReference type="HPA" id="ENSG00000060566">
    <property type="expression patterns" value="Group enriched (intestine, liver)"/>
</dbReference>
<dbReference type="MalaCards" id="CREB3L3"/>
<dbReference type="MIM" id="611998">
    <property type="type" value="gene"/>
</dbReference>
<dbReference type="MIM" id="619324">
    <property type="type" value="phenotype"/>
</dbReference>
<dbReference type="neXtProt" id="NX_Q68CJ9"/>
<dbReference type="OpenTargets" id="ENSG00000060566"/>
<dbReference type="Orphanet" id="300293">
    <property type="disease" value="Transient infantile hypertriglyceridemia and hepatosteatosis"/>
</dbReference>
<dbReference type="PharmGKB" id="PA134882161"/>
<dbReference type="VEuPathDB" id="HostDB:ENSG00000060566"/>
<dbReference type="eggNOG" id="KOG0709">
    <property type="taxonomic scope" value="Eukaryota"/>
</dbReference>
<dbReference type="GeneTree" id="ENSGT00940000159261"/>
<dbReference type="HOGENOM" id="CLU_047257_1_0_1"/>
<dbReference type="InParanoid" id="Q68CJ9"/>
<dbReference type="OMA" id="DSHFFGT"/>
<dbReference type="OrthoDB" id="674948at2759"/>
<dbReference type="PAN-GO" id="Q68CJ9">
    <property type="GO annotations" value="4 GO annotations based on evolutionary models"/>
</dbReference>
<dbReference type="PhylomeDB" id="Q68CJ9"/>
<dbReference type="TreeFam" id="TF316079"/>
<dbReference type="PathwayCommons" id="Q68CJ9"/>
<dbReference type="Reactome" id="R-HSA-8874211">
    <property type="pathway name" value="CREB3 factors activate genes"/>
</dbReference>
<dbReference type="Reactome" id="R-HSA-8963889">
    <property type="pathway name" value="Assembly of active LPL and LIPC lipase complexes"/>
</dbReference>
<dbReference type="SignaLink" id="Q68CJ9"/>
<dbReference type="BioGRID-ORCS" id="84699">
    <property type="hits" value="9 hits in 1171 CRISPR screens"/>
</dbReference>
<dbReference type="ChiTaRS" id="CREB3L3">
    <property type="organism name" value="human"/>
</dbReference>
<dbReference type="GenomeRNAi" id="84699"/>
<dbReference type="Pharos" id="Q68CJ9">
    <property type="development level" value="Tbio"/>
</dbReference>
<dbReference type="PRO" id="PR:Q68CJ9"/>
<dbReference type="Proteomes" id="UP000005640">
    <property type="component" value="Chromosome 19"/>
</dbReference>
<dbReference type="RNAct" id="Q68CJ9">
    <property type="molecule type" value="protein"/>
</dbReference>
<dbReference type="Bgee" id="ENSG00000060566">
    <property type="expression patterns" value="Expressed in right lobe of liver and 91 other cell types or tissues"/>
</dbReference>
<dbReference type="GO" id="GO:0000785">
    <property type="term" value="C:chromatin"/>
    <property type="evidence" value="ECO:0000247"/>
    <property type="project" value="NTNU_SB"/>
</dbReference>
<dbReference type="GO" id="GO:0005829">
    <property type="term" value="C:cytosol"/>
    <property type="evidence" value="ECO:0000304"/>
    <property type="project" value="Reactome"/>
</dbReference>
<dbReference type="GO" id="GO:0005783">
    <property type="term" value="C:endoplasmic reticulum"/>
    <property type="evidence" value="ECO:0000314"/>
    <property type="project" value="ParkinsonsUK-UCL"/>
</dbReference>
<dbReference type="GO" id="GO:0005789">
    <property type="term" value="C:endoplasmic reticulum membrane"/>
    <property type="evidence" value="ECO:0000304"/>
    <property type="project" value="Reactome"/>
</dbReference>
<dbReference type="GO" id="GO:0000139">
    <property type="term" value="C:Golgi membrane"/>
    <property type="evidence" value="ECO:0000304"/>
    <property type="project" value="Reactome"/>
</dbReference>
<dbReference type="GO" id="GO:0016020">
    <property type="term" value="C:membrane"/>
    <property type="evidence" value="ECO:0000250"/>
    <property type="project" value="ParkinsonsUK-UCL"/>
</dbReference>
<dbReference type="GO" id="GO:0005654">
    <property type="term" value="C:nucleoplasm"/>
    <property type="evidence" value="ECO:0000304"/>
    <property type="project" value="Reactome"/>
</dbReference>
<dbReference type="GO" id="GO:0005634">
    <property type="term" value="C:nucleus"/>
    <property type="evidence" value="ECO:0000314"/>
    <property type="project" value="ParkinsonsUK-UCL"/>
</dbReference>
<dbReference type="GO" id="GO:0001228">
    <property type="term" value="F:DNA-binding transcription activator activity, RNA polymerase II-specific"/>
    <property type="evidence" value="ECO:0000314"/>
    <property type="project" value="NTNU_SB"/>
</dbReference>
<dbReference type="GO" id="GO:0000981">
    <property type="term" value="F:DNA-binding transcription factor activity, RNA polymerase II-specific"/>
    <property type="evidence" value="ECO:0000247"/>
    <property type="project" value="NTNU_SB"/>
</dbReference>
<dbReference type="GO" id="GO:0042802">
    <property type="term" value="F:identical protein binding"/>
    <property type="evidence" value="ECO:0000353"/>
    <property type="project" value="IntAct"/>
</dbReference>
<dbReference type="GO" id="GO:0046982">
    <property type="term" value="F:protein heterodimerization activity"/>
    <property type="evidence" value="ECO:0000353"/>
    <property type="project" value="ParkinsonsUK-UCL"/>
</dbReference>
<dbReference type="GO" id="GO:0042803">
    <property type="term" value="F:protein homodimerization activity"/>
    <property type="evidence" value="ECO:0000353"/>
    <property type="project" value="ParkinsonsUK-UCL"/>
</dbReference>
<dbReference type="GO" id="GO:0000978">
    <property type="term" value="F:RNA polymerase II cis-regulatory region sequence-specific DNA binding"/>
    <property type="evidence" value="ECO:0000318"/>
    <property type="project" value="GO_Central"/>
</dbReference>
<dbReference type="GO" id="GO:0000977">
    <property type="term" value="F:RNA polymerase II transcription regulatory region sequence-specific DNA binding"/>
    <property type="evidence" value="ECO:0000314"/>
    <property type="project" value="NTNU_SB"/>
</dbReference>
<dbReference type="GO" id="GO:0000976">
    <property type="term" value="F:transcription cis-regulatory region binding"/>
    <property type="evidence" value="ECO:0000314"/>
    <property type="project" value="ParkinsonsUK-UCL"/>
</dbReference>
<dbReference type="GO" id="GO:0002675">
    <property type="term" value="P:positive regulation of acute inflammatory response"/>
    <property type="evidence" value="ECO:0000303"/>
    <property type="project" value="ParkinsonsUK-UCL"/>
</dbReference>
<dbReference type="GO" id="GO:0045944">
    <property type="term" value="P:positive regulation of transcription by RNA polymerase II"/>
    <property type="evidence" value="ECO:0000314"/>
    <property type="project" value="ParkinsonsUK-UCL"/>
</dbReference>
<dbReference type="GO" id="GO:0006357">
    <property type="term" value="P:regulation of transcription by RNA polymerase II"/>
    <property type="evidence" value="ECO:0000318"/>
    <property type="project" value="GO_Central"/>
</dbReference>
<dbReference type="GO" id="GO:0034976">
    <property type="term" value="P:response to endoplasmic reticulum stress"/>
    <property type="evidence" value="ECO:0000314"/>
    <property type="project" value="ParkinsonsUK-UCL"/>
</dbReference>
<dbReference type="GO" id="GO:0006986">
    <property type="term" value="P:response to unfolded protein"/>
    <property type="evidence" value="ECO:0007669"/>
    <property type="project" value="UniProtKB-KW"/>
</dbReference>
<dbReference type="CDD" id="cd14689">
    <property type="entry name" value="bZIP_CREB3"/>
    <property type="match status" value="1"/>
</dbReference>
<dbReference type="FunFam" id="1.20.5.170:FF:000042">
    <property type="entry name" value="Cyclic AMP-responsive element-binding protein 3-like protein 3"/>
    <property type="match status" value="1"/>
</dbReference>
<dbReference type="Gene3D" id="1.20.5.170">
    <property type="match status" value="1"/>
</dbReference>
<dbReference type="InterPro" id="IPR004827">
    <property type="entry name" value="bZIP"/>
</dbReference>
<dbReference type="InterPro" id="IPR046347">
    <property type="entry name" value="bZIP_sf"/>
</dbReference>
<dbReference type="InterPro" id="IPR051381">
    <property type="entry name" value="CREB_ATF_subfamily"/>
</dbReference>
<dbReference type="PANTHER" id="PTHR45996">
    <property type="entry name" value="AGAP001464-PB"/>
    <property type="match status" value="1"/>
</dbReference>
<dbReference type="PANTHER" id="PTHR45996:SF1">
    <property type="entry name" value="CYCLIC AMP-RESPONSIVE ELEMENT-BINDING PROTEIN 3-LIKE PROTEIN 3"/>
    <property type="match status" value="1"/>
</dbReference>
<dbReference type="Pfam" id="PF00170">
    <property type="entry name" value="bZIP_1"/>
    <property type="match status" value="1"/>
</dbReference>
<dbReference type="SMART" id="SM00338">
    <property type="entry name" value="BRLZ"/>
    <property type="match status" value="1"/>
</dbReference>
<dbReference type="SUPFAM" id="SSF57959">
    <property type="entry name" value="Leucine zipper domain"/>
    <property type="match status" value="1"/>
</dbReference>
<dbReference type="PROSITE" id="PS50217">
    <property type="entry name" value="BZIP"/>
    <property type="match status" value="1"/>
</dbReference>
<dbReference type="PROSITE" id="PS00036">
    <property type="entry name" value="BZIP_BASIC"/>
    <property type="match status" value="1"/>
</dbReference>
<keyword id="KW-0010">Activator</keyword>
<keyword id="KW-0025">Alternative splicing</keyword>
<keyword id="KW-0225">Disease variant</keyword>
<keyword id="KW-0238">DNA-binding</keyword>
<keyword id="KW-0256">Endoplasmic reticulum</keyword>
<keyword id="KW-0325">Glycoprotein</keyword>
<keyword id="KW-1017">Isopeptide bond</keyword>
<keyword id="KW-0472">Membrane</keyword>
<keyword id="KW-0539">Nucleus</keyword>
<keyword id="KW-0597">Phosphoprotein</keyword>
<keyword id="KW-1267">Proteomics identification</keyword>
<keyword id="KW-1185">Reference proteome</keyword>
<keyword id="KW-0735">Signal-anchor</keyword>
<keyword id="KW-0804">Transcription</keyword>
<keyword id="KW-0805">Transcription regulation</keyword>
<keyword id="KW-0812">Transmembrane</keyword>
<keyword id="KW-1133">Transmembrane helix</keyword>
<keyword id="KW-0832">Ubl conjugation</keyword>
<keyword id="KW-0834">Unfolded protein response</keyword>